<organism>
    <name type="scientific">Aeromonas salmonicida (strain A449)</name>
    <dbReference type="NCBI Taxonomy" id="382245"/>
    <lineage>
        <taxon>Bacteria</taxon>
        <taxon>Pseudomonadati</taxon>
        <taxon>Pseudomonadota</taxon>
        <taxon>Gammaproteobacteria</taxon>
        <taxon>Aeromonadales</taxon>
        <taxon>Aeromonadaceae</taxon>
        <taxon>Aeromonas</taxon>
    </lineage>
</organism>
<evidence type="ECO:0000255" key="1">
    <source>
        <dbReference type="HAMAP-Rule" id="MF_00661"/>
    </source>
</evidence>
<evidence type="ECO:0000256" key="2">
    <source>
        <dbReference type="SAM" id="MobiDB-lite"/>
    </source>
</evidence>
<name>RHLB_AERS4</name>
<gene>
    <name evidence="1" type="primary">rhlB</name>
    <name type="ordered locus">ASA_4295</name>
</gene>
<dbReference type="EC" id="3.6.4.13" evidence="1"/>
<dbReference type="EMBL" id="CP000644">
    <property type="protein sequence ID" value="ABO92219.1"/>
    <property type="molecule type" value="Genomic_DNA"/>
</dbReference>
<dbReference type="RefSeq" id="WP_011899248.1">
    <property type="nucleotide sequence ID" value="NC_009348.1"/>
</dbReference>
<dbReference type="SMR" id="A4STJ7"/>
<dbReference type="STRING" id="29491.GCA_000820065_02802"/>
<dbReference type="GeneID" id="79881985"/>
<dbReference type="KEGG" id="asa:ASA_4295"/>
<dbReference type="eggNOG" id="COG0513">
    <property type="taxonomic scope" value="Bacteria"/>
</dbReference>
<dbReference type="HOGENOM" id="CLU_003041_28_3_6"/>
<dbReference type="Proteomes" id="UP000000225">
    <property type="component" value="Chromosome"/>
</dbReference>
<dbReference type="GO" id="GO:0005829">
    <property type="term" value="C:cytosol"/>
    <property type="evidence" value="ECO:0007669"/>
    <property type="project" value="TreeGrafter"/>
</dbReference>
<dbReference type="GO" id="GO:0005524">
    <property type="term" value="F:ATP binding"/>
    <property type="evidence" value="ECO:0007669"/>
    <property type="project" value="UniProtKB-UniRule"/>
</dbReference>
<dbReference type="GO" id="GO:0016887">
    <property type="term" value="F:ATP hydrolysis activity"/>
    <property type="evidence" value="ECO:0007669"/>
    <property type="project" value="RHEA"/>
</dbReference>
<dbReference type="GO" id="GO:0003723">
    <property type="term" value="F:RNA binding"/>
    <property type="evidence" value="ECO:0007669"/>
    <property type="project" value="UniProtKB-UniRule"/>
</dbReference>
<dbReference type="GO" id="GO:0003724">
    <property type="term" value="F:RNA helicase activity"/>
    <property type="evidence" value="ECO:0007669"/>
    <property type="project" value="UniProtKB-UniRule"/>
</dbReference>
<dbReference type="GO" id="GO:0006401">
    <property type="term" value="P:RNA catabolic process"/>
    <property type="evidence" value="ECO:0007669"/>
    <property type="project" value="UniProtKB-UniRule"/>
</dbReference>
<dbReference type="CDD" id="cd00268">
    <property type="entry name" value="DEADc"/>
    <property type="match status" value="1"/>
</dbReference>
<dbReference type="CDD" id="cd18787">
    <property type="entry name" value="SF2_C_DEAD"/>
    <property type="match status" value="1"/>
</dbReference>
<dbReference type="FunFam" id="3.40.50.300:FF:000312">
    <property type="entry name" value="ATP-dependent RNA helicase RhlB"/>
    <property type="match status" value="1"/>
</dbReference>
<dbReference type="Gene3D" id="3.40.50.300">
    <property type="entry name" value="P-loop containing nucleotide triphosphate hydrolases"/>
    <property type="match status" value="2"/>
</dbReference>
<dbReference type="HAMAP" id="MF_00661">
    <property type="entry name" value="DEAD_helicase_RhlB"/>
    <property type="match status" value="1"/>
</dbReference>
<dbReference type="InterPro" id="IPR011545">
    <property type="entry name" value="DEAD/DEAH_box_helicase_dom"/>
</dbReference>
<dbReference type="InterPro" id="IPR050079">
    <property type="entry name" value="DEAD_box_RNA_helicase"/>
</dbReference>
<dbReference type="InterPro" id="IPR014001">
    <property type="entry name" value="Helicase_ATP-bd"/>
</dbReference>
<dbReference type="InterPro" id="IPR001650">
    <property type="entry name" value="Helicase_C-like"/>
</dbReference>
<dbReference type="InterPro" id="IPR027417">
    <property type="entry name" value="P-loop_NTPase"/>
</dbReference>
<dbReference type="InterPro" id="IPR000629">
    <property type="entry name" value="RNA-helicase_DEAD-box_CS"/>
</dbReference>
<dbReference type="InterPro" id="IPR023554">
    <property type="entry name" value="RNA_helicase_ATP-dep_RhlB"/>
</dbReference>
<dbReference type="InterPro" id="IPR014014">
    <property type="entry name" value="RNA_helicase_DEAD_Q_motif"/>
</dbReference>
<dbReference type="NCBIfam" id="NF003419">
    <property type="entry name" value="PRK04837.1"/>
    <property type="match status" value="1"/>
</dbReference>
<dbReference type="PANTHER" id="PTHR47959:SF10">
    <property type="entry name" value="ATP-DEPENDENT RNA HELICASE RHLB"/>
    <property type="match status" value="1"/>
</dbReference>
<dbReference type="PANTHER" id="PTHR47959">
    <property type="entry name" value="ATP-DEPENDENT RNA HELICASE RHLE-RELATED"/>
    <property type="match status" value="1"/>
</dbReference>
<dbReference type="Pfam" id="PF00270">
    <property type="entry name" value="DEAD"/>
    <property type="match status" value="1"/>
</dbReference>
<dbReference type="Pfam" id="PF00271">
    <property type="entry name" value="Helicase_C"/>
    <property type="match status" value="1"/>
</dbReference>
<dbReference type="SMART" id="SM00487">
    <property type="entry name" value="DEXDc"/>
    <property type="match status" value="1"/>
</dbReference>
<dbReference type="SMART" id="SM00490">
    <property type="entry name" value="HELICc"/>
    <property type="match status" value="1"/>
</dbReference>
<dbReference type="SUPFAM" id="SSF52540">
    <property type="entry name" value="P-loop containing nucleoside triphosphate hydrolases"/>
    <property type="match status" value="1"/>
</dbReference>
<dbReference type="PROSITE" id="PS00039">
    <property type="entry name" value="DEAD_ATP_HELICASE"/>
    <property type="match status" value="1"/>
</dbReference>
<dbReference type="PROSITE" id="PS51192">
    <property type="entry name" value="HELICASE_ATP_BIND_1"/>
    <property type="match status" value="1"/>
</dbReference>
<dbReference type="PROSITE" id="PS51194">
    <property type="entry name" value="HELICASE_CTER"/>
    <property type="match status" value="1"/>
</dbReference>
<dbReference type="PROSITE" id="PS51195">
    <property type="entry name" value="Q_MOTIF"/>
    <property type="match status" value="1"/>
</dbReference>
<protein>
    <recommendedName>
        <fullName evidence="1">ATP-dependent RNA helicase RhlB</fullName>
        <ecNumber evidence="1">3.6.4.13</ecNumber>
    </recommendedName>
</protein>
<feature type="chain" id="PRO_1000082835" description="ATP-dependent RNA helicase RhlB">
    <location>
        <begin position="1"/>
        <end position="429"/>
    </location>
</feature>
<feature type="domain" description="Helicase ATP-binding" evidence="1">
    <location>
        <begin position="40"/>
        <end position="219"/>
    </location>
</feature>
<feature type="domain" description="Helicase C-terminal" evidence="1">
    <location>
        <begin position="243"/>
        <end position="390"/>
    </location>
</feature>
<feature type="region of interest" description="Disordered" evidence="2">
    <location>
        <begin position="395"/>
        <end position="429"/>
    </location>
</feature>
<feature type="short sequence motif" description="Q motif">
    <location>
        <begin position="9"/>
        <end position="37"/>
    </location>
</feature>
<feature type="short sequence motif" description="DEAD box">
    <location>
        <begin position="165"/>
        <end position="168"/>
    </location>
</feature>
<feature type="binding site" evidence="1">
    <location>
        <begin position="53"/>
        <end position="60"/>
    </location>
    <ligand>
        <name>ATP</name>
        <dbReference type="ChEBI" id="CHEBI:30616"/>
    </ligand>
</feature>
<proteinExistence type="inferred from homology"/>
<keyword id="KW-0067">ATP-binding</keyword>
<keyword id="KW-0963">Cytoplasm</keyword>
<keyword id="KW-0347">Helicase</keyword>
<keyword id="KW-0378">Hydrolase</keyword>
<keyword id="KW-0547">Nucleotide-binding</keyword>
<keyword id="KW-0694">RNA-binding</keyword>
<reference key="1">
    <citation type="journal article" date="2008" name="BMC Genomics">
        <title>The genome of Aeromonas salmonicida subsp. salmonicida A449: insights into the evolution of a fish pathogen.</title>
        <authorList>
            <person name="Reith M.E."/>
            <person name="Singh R.K."/>
            <person name="Curtis B."/>
            <person name="Boyd J.M."/>
            <person name="Bouevitch A."/>
            <person name="Kimball J."/>
            <person name="Munholland J."/>
            <person name="Murphy C."/>
            <person name="Sarty D."/>
            <person name="Williams J."/>
            <person name="Nash J.H."/>
            <person name="Johnson S.C."/>
            <person name="Brown L.L."/>
        </authorList>
    </citation>
    <scope>NUCLEOTIDE SEQUENCE [LARGE SCALE GENOMIC DNA]</scope>
    <source>
        <strain>A449</strain>
    </source>
</reference>
<accession>A4STJ7</accession>
<comment type="function">
    <text evidence="1">DEAD-box RNA helicase involved in RNA degradation. Has RNA-dependent ATPase activity and unwinds double-stranded RNA.</text>
</comment>
<comment type="catalytic activity">
    <reaction evidence="1">
        <text>ATP + H2O = ADP + phosphate + H(+)</text>
        <dbReference type="Rhea" id="RHEA:13065"/>
        <dbReference type="ChEBI" id="CHEBI:15377"/>
        <dbReference type="ChEBI" id="CHEBI:15378"/>
        <dbReference type="ChEBI" id="CHEBI:30616"/>
        <dbReference type="ChEBI" id="CHEBI:43474"/>
        <dbReference type="ChEBI" id="CHEBI:456216"/>
        <dbReference type="EC" id="3.6.4.13"/>
    </reaction>
</comment>
<comment type="subunit">
    <text evidence="1">Component of the RNA degradosome, which is a multiprotein complex involved in RNA processing and mRNA degradation.</text>
</comment>
<comment type="subcellular location">
    <subcellularLocation>
        <location evidence="1">Cytoplasm</location>
    </subcellularLocation>
</comment>
<comment type="similarity">
    <text evidence="1">Belongs to the DEAD box helicase family. RhlB subfamily.</text>
</comment>
<sequence length="429" mass="48215">MSKTHLTTEKFAQMGLEPEVLAGLESKGFHYCTPIQALSLPLLVEGHDLAGQAQTGTGKTIAFLAATFNYLLTHPLSNPRLVNQPRAIIMAPTRELAVQIYNDADTISASTGLKLGLAYGGEGYDKQLAVLEQGVDILIGTTGRIIDYFKSKVIDLSNIQVVVLDEADRMFDLGFIKDIRFLFRRMPAPTERLSMLFSATLSLRVQELAYEHMNHPEHVQIEPEQMTGIRIQEELFYPSNEDKMLLLLSLMEEEWPEKAIVFANTKHVCEDVHAWLENDGHRVGLLTGDVPQKKRMKILEDFTKGTLDILVATDVAARGLHIPDVTHVFNYDLPDDAEDYVHRIGRTGRAGKSGHSISLACEDYAFNLPAIEEYIHHPIPVSKYDREALLDDVTAPKRVVRNRQPVNRNMRDRQGGGNSNNRRRPPRKS</sequence>